<proteinExistence type="inferred from homology"/>
<name>TSAD_MYCTA</name>
<evidence type="ECO:0000255" key="1">
    <source>
        <dbReference type="HAMAP-Rule" id="MF_01445"/>
    </source>
</evidence>
<evidence type="ECO:0000256" key="2">
    <source>
        <dbReference type="SAM" id="MobiDB-lite"/>
    </source>
</evidence>
<keyword id="KW-0012">Acyltransferase</keyword>
<keyword id="KW-0963">Cytoplasm</keyword>
<keyword id="KW-0408">Iron</keyword>
<keyword id="KW-0479">Metal-binding</keyword>
<keyword id="KW-1185">Reference proteome</keyword>
<keyword id="KW-0808">Transferase</keyword>
<keyword id="KW-0819">tRNA processing</keyword>
<organism>
    <name type="scientific">Mycobacterium tuberculosis (strain ATCC 25177 / H37Ra)</name>
    <dbReference type="NCBI Taxonomy" id="419947"/>
    <lineage>
        <taxon>Bacteria</taxon>
        <taxon>Bacillati</taxon>
        <taxon>Actinomycetota</taxon>
        <taxon>Actinomycetes</taxon>
        <taxon>Mycobacteriales</taxon>
        <taxon>Mycobacteriaceae</taxon>
        <taxon>Mycobacterium</taxon>
        <taxon>Mycobacterium tuberculosis complex</taxon>
    </lineage>
</organism>
<protein>
    <recommendedName>
        <fullName evidence="1">tRNA N6-adenosine threonylcarbamoyltransferase</fullName>
        <ecNumber evidence="1">2.3.1.234</ecNumber>
    </recommendedName>
    <alternativeName>
        <fullName evidence="1">N6-L-threonylcarbamoyladenine synthase</fullName>
        <shortName evidence="1">t(6)A synthase</shortName>
    </alternativeName>
    <alternativeName>
        <fullName evidence="1">t(6)A37 threonylcarbamoyladenosine biosynthesis protein TsaD</fullName>
    </alternativeName>
    <alternativeName>
        <fullName evidence="1">tRNA threonylcarbamoyladenosine biosynthesis protein TsaD</fullName>
    </alternativeName>
</protein>
<comment type="function">
    <text evidence="1">Required for the formation of a threonylcarbamoyl group on adenosine at position 37 (t(6)A37) in tRNAs that read codons beginning with adenine. Is involved in the transfer of the threonylcarbamoyl moiety of threonylcarbamoyl-AMP (TC-AMP) to the N6 group of A37, together with TsaE and TsaB. TsaD likely plays a direct catalytic role in this reaction.</text>
</comment>
<comment type="catalytic activity">
    <reaction evidence="1">
        <text>L-threonylcarbamoyladenylate + adenosine(37) in tRNA = N(6)-L-threonylcarbamoyladenosine(37) in tRNA + AMP + H(+)</text>
        <dbReference type="Rhea" id="RHEA:37059"/>
        <dbReference type="Rhea" id="RHEA-COMP:10162"/>
        <dbReference type="Rhea" id="RHEA-COMP:10163"/>
        <dbReference type="ChEBI" id="CHEBI:15378"/>
        <dbReference type="ChEBI" id="CHEBI:73682"/>
        <dbReference type="ChEBI" id="CHEBI:74411"/>
        <dbReference type="ChEBI" id="CHEBI:74418"/>
        <dbReference type="ChEBI" id="CHEBI:456215"/>
        <dbReference type="EC" id="2.3.1.234"/>
    </reaction>
</comment>
<comment type="cofactor">
    <cofactor evidence="1">
        <name>Fe(2+)</name>
        <dbReference type="ChEBI" id="CHEBI:29033"/>
    </cofactor>
    <text evidence="1">Binds 1 Fe(2+) ion per subunit.</text>
</comment>
<comment type="subcellular location">
    <subcellularLocation>
        <location evidence="1">Cytoplasm</location>
    </subcellularLocation>
</comment>
<comment type="similarity">
    <text evidence="1">Belongs to the KAE1 / TsaD family.</text>
</comment>
<accession>A5U894</accession>
<dbReference type="EC" id="2.3.1.234" evidence="1"/>
<dbReference type="EMBL" id="CP000611">
    <property type="protein sequence ID" value="ABQ75244.1"/>
    <property type="molecule type" value="Genomic_DNA"/>
</dbReference>
<dbReference type="RefSeq" id="WP_003900052.1">
    <property type="nucleotide sequence ID" value="NZ_CP016972.1"/>
</dbReference>
<dbReference type="SMR" id="A5U894"/>
<dbReference type="KEGG" id="mra:MRA_3459"/>
<dbReference type="eggNOG" id="COG0533">
    <property type="taxonomic scope" value="Bacteria"/>
</dbReference>
<dbReference type="HOGENOM" id="CLU_023208_0_2_11"/>
<dbReference type="Proteomes" id="UP000001988">
    <property type="component" value="Chromosome"/>
</dbReference>
<dbReference type="GO" id="GO:0005737">
    <property type="term" value="C:cytoplasm"/>
    <property type="evidence" value="ECO:0007669"/>
    <property type="project" value="UniProtKB-SubCell"/>
</dbReference>
<dbReference type="GO" id="GO:0005506">
    <property type="term" value="F:iron ion binding"/>
    <property type="evidence" value="ECO:0007669"/>
    <property type="project" value="UniProtKB-UniRule"/>
</dbReference>
<dbReference type="GO" id="GO:0061711">
    <property type="term" value="F:N(6)-L-threonylcarbamoyladenine synthase activity"/>
    <property type="evidence" value="ECO:0007669"/>
    <property type="project" value="UniProtKB-EC"/>
</dbReference>
<dbReference type="GO" id="GO:0002949">
    <property type="term" value="P:tRNA threonylcarbamoyladenosine modification"/>
    <property type="evidence" value="ECO:0007669"/>
    <property type="project" value="UniProtKB-UniRule"/>
</dbReference>
<dbReference type="CDD" id="cd24133">
    <property type="entry name" value="ASKHA_NBD_TsaD_bac"/>
    <property type="match status" value="1"/>
</dbReference>
<dbReference type="FunFam" id="3.30.420.40:FF:000012">
    <property type="entry name" value="tRNA N6-adenosine threonylcarbamoyltransferase"/>
    <property type="match status" value="1"/>
</dbReference>
<dbReference type="FunFam" id="3.30.420.40:FF:000040">
    <property type="entry name" value="tRNA N6-adenosine threonylcarbamoyltransferase"/>
    <property type="match status" value="1"/>
</dbReference>
<dbReference type="Gene3D" id="3.30.420.40">
    <property type="match status" value="2"/>
</dbReference>
<dbReference type="HAMAP" id="MF_01445">
    <property type="entry name" value="TsaD"/>
    <property type="match status" value="1"/>
</dbReference>
<dbReference type="InterPro" id="IPR043129">
    <property type="entry name" value="ATPase_NBD"/>
</dbReference>
<dbReference type="InterPro" id="IPR000905">
    <property type="entry name" value="Gcp-like_dom"/>
</dbReference>
<dbReference type="InterPro" id="IPR017861">
    <property type="entry name" value="KAE1/TsaD"/>
</dbReference>
<dbReference type="InterPro" id="IPR017860">
    <property type="entry name" value="Peptidase_M22_CS"/>
</dbReference>
<dbReference type="InterPro" id="IPR022450">
    <property type="entry name" value="TsaD"/>
</dbReference>
<dbReference type="NCBIfam" id="TIGR00329">
    <property type="entry name" value="gcp_kae1"/>
    <property type="match status" value="1"/>
</dbReference>
<dbReference type="NCBIfam" id="TIGR03723">
    <property type="entry name" value="T6A_TsaD_YgjD"/>
    <property type="match status" value="1"/>
</dbReference>
<dbReference type="PANTHER" id="PTHR11735">
    <property type="entry name" value="TRNA N6-ADENOSINE THREONYLCARBAMOYLTRANSFERASE"/>
    <property type="match status" value="1"/>
</dbReference>
<dbReference type="PANTHER" id="PTHR11735:SF6">
    <property type="entry name" value="TRNA N6-ADENOSINE THREONYLCARBAMOYLTRANSFERASE, MITOCHONDRIAL"/>
    <property type="match status" value="1"/>
</dbReference>
<dbReference type="Pfam" id="PF00814">
    <property type="entry name" value="TsaD"/>
    <property type="match status" value="1"/>
</dbReference>
<dbReference type="PRINTS" id="PR00789">
    <property type="entry name" value="OSIALOPTASE"/>
</dbReference>
<dbReference type="SUPFAM" id="SSF53067">
    <property type="entry name" value="Actin-like ATPase domain"/>
    <property type="match status" value="2"/>
</dbReference>
<dbReference type="PROSITE" id="PS01016">
    <property type="entry name" value="GLYCOPROTEASE"/>
    <property type="match status" value="1"/>
</dbReference>
<sequence>MTTVLGIETSCDETGVGIARLDPDGTVTLLADEVASSVDEHVRFGGVVPEIASRAHLEALGPAMRRALAAAGLKQPDIVAATIGPGLAGALLVGVAAAKAYSAAWGVPFYAVNHLGGHLAADVYEHGPLPECVALLVSGGHTHLLHVRSLGEPIIELGSTVDDAAGEAYDKVARLLGLGYPGGKALDDLARTGDRDAIVFPRGMSGPADDRYAFSFSGLKTAVARYVESHAADPGFRTADIAAGFQEAVADVLTMKAVRAATALGVSTLLIAGGVAANSRLRELATQRCGEAGRTLRIPSPRLCTDNGAMIAAFAAQLVAAGAPPSPLDVPSDPGLPVMQGQVR</sequence>
<reference key="1">
    <citation type="journal article" date="2008" name="PLoS ONE">
        <title>Genetic basis of virulence attenuation revealed by comparative genomic analysis of Mycobacterium tuberculosis strain H37Ra versus H37Rv.</title>
        <authorList>
            <person name="Zheng H."/>
            <person name="Lu L."/>
            <person name="Wang B."/>
            <person name="Pu S."/>
            <person name="Zhang X."/>
            <person name="Zhu G."/>
            <person name="Shi W."/>
            <person name="Zhang L."/>
            <person name="Wang H."/>
            <person name="Wang S."/>
            <person name="Zhao G."/>
            <person name="Zhang Y."/>
        </authorList>
    </citation>
    <scope>NUCLEOTIDE SEQUENCE [LARGE SCALE GENOMIC DNA]</scope>
    <source>
        <strain>ATCC 25177 / H37Ra</strain>
    </source>
</reference>
<gene>
    <name evidence="1" type="primary">tsaD</name>
    <name type="synonym">gcp</name>
    <name type="ordered locus">MRA_3459</name>
</gene>
<feature type="chain" id="PRO_0000303435" description="tRNA N6-adenosine threonylcarbamoyltransferase">
    <location>
        <begin position="1"/>
        <end position="344"/>
    </location>
</feature>
<feature type="region of interest" description="Disordered" evidence="2">
    <location>
        <begin position="325"/>
        <end position="344"/>
    </location>
</feature>
<feature type="binding site" evidence="1">
    <location>
        <position position="114"/>
    </location>
    <ligand>
        <name>Fe cation</name>
        <dbReference type="ChEBI" id="CHEBI:24875"/>
    </ligand>
</feature>
<feature type="binding site" evidence="1">
    <location>
        <position position="118"/>
    </location>
    <ligand>
        <name>Fe cation</name>
        <dbReference type="ChEBI" id="CHEBI:24875"/>
    </ligand>
</feature>
<feature type="binding site" evidence="1">
    <location>
        <begin position="136"/>
        <end position="140"/>
    </location>
    <ligand>
        <name>substrate</name>
    </ligand>
</feature>
<feature type="binding site" evidence="1">
    <location>
        <position position="170"/>
    </location>
    <ligand>
        <name>substrate</name>
    </ligand>
</feature>
<feature type="binding site" evidence="1">
    <location>
        <position position="183"/>
    </location>
    <ligand>
        <name>substrate</name>
    </ligand>
</feature>
<feature type="binding site" evidence="1">
    <location>
        <position position="187"/>
    </location>
    <ligand>
        <name>substrate</name>
    </ligand>
</feature>
<feature type="binding site" evidence="1">
    <location>
        <position position="278"/>
    </location>
    <ligand>
        <name>substrate</name>
    </ligand>
</feature>
<feature type="binding site" evidence="1">
    <location>
        <position position="306"/>
    </location>
    <ligand>
        <name>Fe cation</name>
        <dbReference type="ChEBI" id="CHEBI:24875"/>
    </ligand>
</feature>